<evidence type="ECO:0000250" key="1"/>
<evidence type="ECO:0000255" key="2">
    <source>
        <dbReference type="PROSITE-ProRule" id="PRU00080"/>
    </source>
</evidence>
<evidence type="ECO:0000269" key="3">
    <source>
    </source>
</evidence>
<proteinExistence type="evidence at protein level"/>
<reference key="1">
    <citation type="journal article" date="2000" name="DNA Res.">
        <title>Structural analysis of Arabidopsis thaliana chromosome 3. I. Sequence features of the regions of 4,504,864 bp covered by sixty P1 and TAC clones.</title>
        <authorList>
            <person name="Sato S."/>
            <person name="Nakamura Y."/>
            <person name="Kaneko T."/>
            <person name="Katoh T."/>
            <person name="Asamizu E."/>
            <person name="Tabata S."/>
        </authorList>
    </citation>
    <scope>NUCLEOTIDE SEQUENCE [LARGE SCALE GENOMIC DNA]</scope>
    <source>
        <strain>cv. Columbia</strain>
    </source>
</reference>
<reference key="2">
    <citation type="journal article" date="2017" name="Plant J.">
        <title>Araport11: a complete reannotation of the Arabidopsis thaliana reference genome.</title>
        <authorList>
            <person name="Cheng C.Y."/>
            <person name="Krishnakumar V."/>
            <person name="Chan A.P."/>
            <person name="Thibaud-Nissen F."/>
            <person name="Schobel S."/>
            <person name="Town C.D."/>
        </authorList>
    </citation>
    <scope>GENOME REANNOTATION</scope>
    <source>
        <strain>cv. Columbia</strain>
    </source>
</reference>
<reference key="3">
    <citation type="journal article" date="2003" name="Science">
        <title>Empirical analysis of transcriptional activity in the Arabidopsis genome.</title>
        <authorList>
            <person name="Yamada K."/>
            <person name="Lim J."/>
            <person name="Dale J.M."/>
            <person name="Chen H."/>
            <person name="Shinn P."/>
            <person name="Palm C.J."/>
            <person name="Southwick A.M."/>
            <person name="Wu H.C."/>
            <person name="Kim C.J."/>
            <person name="Nguyen M."/>
            <person name="Pham P.K."/>
            <person name="Cheuk R.F."/>
            <person name="Karlin-Newmann G."/>
            <person name="Liu S.X."/>
            <person name="Lam B."/>
            <person name="Sakano H."/>
            <person name="Wu T."/>
            <person name="Yu G."/>
            <person name="Miranda M."/>
            <person name="Quach H.L."/>
            <person name="Tripp M."/>
            <person name="Chang C.H."/>
            <person name="Lee J.M."/>
            <person name="Toriumi M.J."/>
            <person name="Chan M.M."/>
            <person name="Tang C.C."/>
            <person name="Onodera C.S."/>
            <person name="Deng J.M."/>
            <person name="Akiyama K."/>
            <person name="Ansari Y."/>
            <person name="Arakawa T."/>
            <person name="Banh J."/>
            <person name="Banno F."/>
            <person name="Bowser L."/>
            <person name="Brooks S.Y."/>
            <person name="Carninci P."/>
            <person name="Chao Q."/>
            <person name="Choy N."/>
            <person name="Enju A."/>
            <person name="Goldsmith A.D."/>
            <person name="Gurjal M."/>
            <person name="Hansen N.F."/>
            <person name="Hayashizaki Y."/>
            <person name="Johnson-Hopson C."/>
            <person name="Hsuan V.W."/>
            <person name="Iida K."/>
            <person name="Karnes M."/>
            <person name="Khan S."/>
            <person name="Koesema E."/>
            <person name="Ishida J."/>
            <person name="Jiang P.X."/>
            <person name="Jones T."/>
            <person name="Kawai J."/>
            <person name="Kamiya A."/>
            <person name="Meyers C."/>
            <person name="Nakajima M."/>
            <person name="Narusaka M."/>
            <person name="Seki M."/>
            <person name="Sakurai T."/>
            <person name="Satou M."/>
            <person name="Tamse R."/>
            <person name="Vaysberg M."/>
            <person name="Wallender E.K."/>
            <person name="Wong C."/>
            <person name="Yamamura Y."/>
            <person name="Yuan S."/>
            <person name="Shinozaki K."/>
            <person name="Davis R.W."/>
            <person name="Theologis A."/>
            <person name="Ecker J.R."/>
        </authorList>
    </citation>
    <scope>NUCLEOTIDE SEQUENCE [LARGE SCALE MRNA]</scope>
    <source>
        <strain>cv. Columbia</strain>
    </source>
</reference>
<reference key="4">
    <citation type="submission" date="2006-07" db="EMBL/GenBank/DDBJ databases">
        <title>Large-scale analysis of RIKEN Arabidopsis full-length (RAFL) cDNAs.</title>
        <authorList>
            <person name="Totoki Y."/>
            <person name="Seki M."/>
            <person name="Ishida J."/>
            <person name="Nakajima M."/>
            <person name="Enju A."/>
            <person name="Kamiya A."/>
            <person name="Narusaka M."/>
            <person name="Shin-i T."/>
            <person name="Nakagawa M."/>
            <person name="Sakamoto N."/>
            <person name="Oishi K."/>
            <person name="Kohara Y."/>
            <person name="Kobayashi M."/>
            <person name="Toyoda A."/>
            <person name="Sakaki Y."/>
            <person name="Sakurai T."/>
            <person name="Iida K."/>
            <person name="Akiyama K."/>
            <person name="Satou M."/>
            <person name="Toyoda T."/>
            <person name="Konagaya A."/>
            <person name="Carninci P."/>
            <person name="Kawai J."/>
            <person name="Hayashizaki Y."/>
            <person name="Shinozaki K."/>
        </authorList>
    </citation>
    <scope>NUCLEOTIDE SEQUENCE [LARGE SCALE MRNA]</scope>
    <source>
        <strain>cv. Columbia</strain>
    </source>
</reference>
<reference key="5">
    <citation type="journal article" date="2002" name="Proc. Natl. Acad. Sci. U.S.A.">
        <title>The F-box subunit of the SCF E3 complex is encoded by a diverse superfamily of genes in Arabidopsis.</title>
        <authorList>
            <person name="Gagne J.M."/>
            <person name="Downes B.P."/>
            <person name="Shiu S.-H."/>
            <person name="Durski A.M."/>
            <person name="Vierstra R.D."/>
        </authorList>
    </citation>
    <scope>INTERACTION WITH ASK11</scope>
</reference>
<sequence>MVQISDLPRDLTEEVLSRIPVTSMRAVRFTCKKWNTLSKDRSFTKKHLRGARAAAKKKQTKEFQVIMMIQFRVYLYSVNLLNPSIERIGKLISLDVEDHVDISKIFHCGGLLLCITKDISRLVVWNPYSGQTRWIKPRNSYHRLDRYALGYEEKNKSCRCYKILRFMDDYEDDRALRLIREFEIYDLNSDSWKVVNVTPDWDVEFYHRGLSLKGNTYWFAQEKLPPLPRGRVITISDMADFLLCFDFTRERFGPRLPLPFHSFVEDTVTLSSVRDKKLAVLFQPCSASTVKIWISRKIEPNAVSWRKVFLAVDMKSLTGFQFDINAASFFVDEKKKVAMVLDKDRFSYKFTRNIAYIIGKKGYFEKVDLGESTVSSCASLVCSYVPSSVQI</sequence>
<feature type="chain" id="PRO_0000283216" description="F-box/kelch-repeat protein At3g16740">
    <location>
        <begin position="1"/>
        <end position="391"/>
    </location>
</feature>
<feature type="domain" description="F-box" evidence="2">
    <location>
        <begin position="1"/>
        <end position="47"/>
    </location>
</feature>
<feature type="repeat" description="Kelch 1">
    <location>
        <begin position="104"/>
        <end position="154"/>
    </location>
</feature>
<feature type="repeat" description="Kelch 2">
    <location>
        <begin position="163"/>
        <end position="215"/>
    </location>
</feature>
<accession>Q9LUQ9</accession>
<keyword id="KW-0880">Kelch repeat</keyword>
<keyword id="KW-0539">Nucleus</keyword>
<keyword id="KW-1185">Reference proteome</keyword>
<keyword id="KW-0677">Repeat</keyword>
<keyword id="KW-0833">Ubl conjugation pathway</keyword>
<name>FBK56_ARATH</name>
<organism>
    <name type="scientific">Arabidopsis thaliana</name>
    <name type="common">Mouse-ear cress</name>
    <dbReference type="NCBI Taxonomy" id="3702"/>
    <lineage>
        <taxon>Eukaryota</taxon>
        <taxon>Viridiplantae</taxon>
        <taxon>Streptophyta</taxon>
        <taxon>Embryophyta</taxon>
        <taxon>Tracheophyta</taxon>
        <taxon>Spermatophyta</taxon>
        <taxon>Magnoliopsida</taxon>
        <taxon>eudicotyledons</taxon>
        <taxon>Gunneridae</taxon>
        <taxon>Pentapetalae</taxon>
        <taxon>rosids</taxon>
        <taxon>malvids</taxon>
        <taxon>Brassicales</taxon>
        <taxon>Brassicaceae</taxon>
        <taxon>Camelineae</taxon>
        <taxon>Arabidopsis</taxon>
    </lineage>
</organism>
<gene>
    <name type="ordered locus">At3g16740</name>
    <name type="ORF">MGL6.21</name>
</gene>
<comment type="function">
    <text evidence="1">Component of SCF(ASK-cullin-F-box) E3 ubiquitin ligase complexes, which may mediate the ubiquitination and subsequent proteasomal degradation of target proteins.</text>
</comment>
<comment type="pathway">
    <text>Protein modification; protein ubiquitination.</text>
</comment>
<comment type="subunit">
    <text evidence="1 3">Part of a SCF (ASK-cullin-F-box) protein ligase complex (By similarity). Interacts with ASK11.</text>
</comment>
<comment type="subcellular location">
    <subcellularLocation>
        <location evidence="1">Nucleus</location>
    </subcellularLocation>
</comment>
<comment type="domain">
    <text evidence="1">The F-box is necessary for the interaction with ASK proteins.</text>
</comment>
<dbReference type="EMBL" id="AB022217">
    <property type="protein sequence ID" value="BAB02766.1"/>
    <property type="molecule type" value="Genomic_DNA"/>
</dbReference>
<dbReference type="EMBL" id="CP002686">
    <property type="protein sequence ID" value="AEE75859.1"/>
    <property type="molecule type" value="Genomic_DNA"/>
</dbReference>
<dbReference type="EMBL" id="BT004826">
    <property type="protein sequence ID" value="AAO44092.1"/>
    <property type="molecule type" value="mRNA"/>
</dbReference>
<dbReference type="EMBL" id="AK227738">
    <property type="protein sequence ID" value="BAE99722.1"/>
    <property type="molecule type" value="mRNA"/>
</dbReference>
<dbReference type="RefSeq" id="NP_566558.1">
    <property type="nucleotide sequence ID" value="NM_112547.4"/>
</dbReference>
<dbReference type="BioGRID" id="6260">
    <property type="interactions" value="2"/>
</dbReference>
<dbReference type="FunCoup" id="Q9LUQ9">
    <property type="interactions" value="60"/>
</dbReference>
<dbReference type="IntAct" id="Q9LUQ9">
    <property type="interactions" value="1"/>
</dbReference>
<dbReference type="STRING" id="3702.Q9LUQ9"/>
<dbReference type="PaxDb" id="3702-AT3G16740.1"/>
<dbReference type="ProteomicsDB" id="230931"/>
<dbReference type="EnsemblPlants" id="AT3G16740.1">
    <property type="protein sequence ID" value="AT3G16740.1"/>
    <property type="gene ID" value="AT3G16740"/>
</dbReference>
<dbReference type="GeneID" id="820926"/>
<dbReference type="Gramene" id="AT3G16740.1">
    <property type="protein sequence ID" value="AT3G16740.1"/>
    <property type="gene ID" value="AT3G16740"/>
</dbReference>
<dbReference type="KEGG" id="ath:AT3G16740"/>
<dbReference type="Araport" id="AT3G16740"/>
<dbReference type="TAIR" id="AT3G16740">
    <property type="gene designation" value="FOA2"/>
</dbReference>
<dbReference type="HOGENOM" id="CLU_034692_0_0_1"/>
<dbReference type="InParanoid" id="Q9LUQ9"/>
<dbReference type="OMA" id="FQECAPV"/>
<dbReference type="OrthoDB" id="1021741at2759"/>
<dbReference type="PhylomeDB" id="Q9LUQ9"/>
<dbReference type="UniPathway" id="UPA00143"/>
<dbReference type="PRO" id="PR:Q9LUQ9"/>
<dbReference type="Proteomes" id="UP000006548">
    <property type="component" value="Chromosome 3"/>
</dbReference>
<dbReference type="ExpressionAtlas" id="Q9LUQ9">
    <property type="expression patterns" value="baseline and differential"/>
</dbReference>
<dbReference type="GO" id="GO:0005634">
    <property type="term" value="C:nucleus"/>
    <property type="evidence" value="ECO:0007669"/>
    <property type="project" value="UniProtKB-SubCell"/>
</dbReference>
<dbReference type="GO" id="GO:0016567">
    <property type="term" value="P:protein ubiquitination"/>
    <property type="evidence" value="ECO:0007669"/>
    <property type="project" value="UniProtKB-UniPathway"/>
</dbReference>
<dbReference type="GO" id="GO:0010029">
    <property type="term" value="P:regulation of seed germination"/>
    <property type="evidence" value="ECO:0000315"/>
    <property type="project" value="TAIR"/>
</dbReference>
<dbReference type="CDD" id="cd22157">
    <property type="entry name" value="F-box_AtFBW1-like"/>
    <property type="match status" value="1"/>
</dbReference>
<dbReference type="Gene3D" id="1.20.1280.50">
    <property type="match status" value="1"/>
</dbReference>
<dbReference type="InterPro" id="IPR006527">
    <property type="entry name" value="F-box-assoc_dom_typ1"/>
</dbReference>
<dbReference type="InterPro" id="IPR017451">
    <property type="entry name" value="F-box-assoc_interact_dom"/>
</dbReference>
<dbReference type="InterPro" id="IPR036047">
    <property type="entry name" value="F-box-like_dom_sf"/>
</dbReference>
<dbReference type="InterPro" id="IPR001810">
    <property type="entry name" value="F-box_dom"/>
</dbReference>
<dbReference type="InterPro" id="IPR050796">
    <property type="entry name" value="SCF_F-box_component"/>
</dbReference>
<dbReference type="NCBIfam" id="TIGR01640">
    <property type="entry name" value="F_box_assoc_1"/>
    <property type="match status" value="1"/>
</dbReference>
<dbReference type="PANTHER" id="PTHR31672">
    <property type="entry name" value="BNACNNG10540D PROTEIN"/>
    <property type="match status" value="1"/>
</dbReference>
<dbReference type="PANTHER" id="PTHR31672:SF13">
    <property type="entry name" value="F-BOX PROTEIN CPR30-LIKE"/>
    <property type="match status" value="1"/>
</dbReference>
<dbReference type="Pfam" id="PF00646">
    <property type="entry name" value="F-box"/>
    <property type="match status" value="1"/>
</dbReference>
<dbReference type="Pfam" id="PF07734">
    <property type="entry name" value="FBA_1"/>
    <property type="match status" value="1"/>
</dbReference>
<dbReference type="SMART" id="SM00256">
    <property type="entry name" value="FBOX"/>
    <property type="match status" value="1"/>
</dbReference>
<dbReference type="SUPFAM" id="SSF81383">
    <property type="entry name" value="F-box domain"/>
    <property type="match status" value="1"/>
</dbReference>
<dbReference type="PROSITE" id="PS50181">
    <property type="entry name" value="FBOX"/>
    <property type="match status" value="1"/>
</dbReference>
<protein>
    <recommendedName>
        <fullName>F-box/kelch-repeat protein At3g16740</fullName>
    </recommendedName>
</protein>